<keyword id="KW-0238">DNA-binding</keyword>
<keyword id="KW-1185">Reference proteome</keyword>
<keyword id="KW-0678">Repressor</keyword>
<keyword id="KW-0804">Transcription</keyword>
<keyword id="KW-0805">Transcription regulation</keyword>
<sequence>MSLTELTGNPRHDQLLMLIAERGYMNIDELANLLDVSTQTVRRDIRKLSEQGLITRHHGGAGRASSVVNTAFEQREVSQTEEKKAIAEAVADYIPDGSTIFITIGTTVEHVARALLNHNHLRIITNSLRVAHILYHNPRFEVMVPGGTLRSHNSGIIGPSAASFVADFRADYLVTSVGAIESDGALMEFDVNEANVVKTMMAHARNILLVADHTKYHASAAVEIGNVAQVTALFTDELPPAALKSRLQDSQIEIILPQEDA</sequence>
<name>CSQR_ECOLI</name>
<proteinExistence type="evidence at protein level"/>
<accession>P32144</accession>
<accession>Q2M8I1</accession>
<protein>
    <recommendedName>
        <fullName evidence="4">HTH-type transcriptional repressor CsqR</fullName>
    </recommendedName>
    <alternativeName>
        <fullName evidence="3">Regulator of sulfoquinovose catabolism</fullName>
    </alternativeName>
</protein>
<feature type="chain" id="PRO_0000050276" description="HTH-type transcriptional repressor CsqR">
    <location>
        <begin position="1"/>
        <end position="261"/>
    </location>
</feature>
<feature type="domain" description="HTH deoR-type" evidence="1">
    <location>
        <begin position="8"/>
        <end position="63"/>
    </location>
</feature>
<feature type="DNA-binding region" description="H-T-H motif" evidence="1">
    <location>
        <begin position="25"/>
        <end position="44"/>
    </location>
</feature>
<reference key="1">
    <citation type="journal article" date="1993" name="Nucleic Acids Res.">
        <title>Analysis of the Escherichia coli genome. III. DNA sequence of the region from 87.2 to 89.2 minutes.</title>
        <authorList>
            <person name="Plunkett G. III"/>
            <person name="Burland V."/>
            <person name="Daniels D.L."/>
            <person name="Blattner F.R."/>
        </authorList>
    </citation>
    <scope>NUCLEOTIDE SEQUENCE [LARGE SCALE GENOMIC DNA]</scope>
    <source>
        <strain>K12 / MG1655 / ATCC 47076</strain>
    </source>
</reference>
<reference key="2">
    <citation type="journal article" date="1997" name="Science">
        <title>The complete genome sequence of Escherichia coli K-12.</title>
        <authorList>
            <person name="Blattner F.R."/>
            <person name="Plunkett G. III"/>
            <person name="Bloch C.A."/>
            <person name="Perna N.T."/>
            <person name="Burland V."/>
            <person name="Riley M."/>
            <person name="Collado-Vides J."/>
            <person name="Glasner J.D."/>
            <person name="Rode C.K."/>
            <person name="Mayhew G.F."/>
            <person name="Gregor J."/>
            <person name="Davis N.W."/>
            <person name="Kirkpatrick H.A."/>
            <person name="Goeden M.A."/>
            <person name="Rose D.J."/>
            <person name="Mau B."/>
            <person name="Shao Y."/>
        </authorList>
    </citation>
    <scope>NUCLEOTIDE SEQUENCE [LARGE SCALE GENOMIC DNA]</scope>
    <source>
        <strain>K12 / MG1655 / ATCC 47076</strain>
    </source>
</reference>
<reference key="3">
    <citation type="journal article" date="2006" name="Mol. Syst. Biol.">
        <title>Highly accurate genome sequences of Escherichia coli K-12 strains MG1655 and W3110.</title>
        <authorList>
            <person name="Hayashi K."/>
            <person name="Morooka N."/>
            <person name="Yamamoto Y."/>
            <person name="Fujita K."/>
            <person name="Isono K."/>
            <person name="Choi S."/>
            <person name="Ohtsubo E."/>
            <person name="Baba T."/>
            <person name="Wanner B.L."/>
            <person name="Mori H."/>
            <person name="Horiuchi T."/>
        </authorList>
    </citation>
    <scope>NUCLEOTIDE SEQUENCE [LARGE SCALE GENOMIC DNA]</scope>
    <source>
        <strain>K12 / W3110 / ATCC 27325 / DSM 5911</strain>
    </source>
</reference>
<reference key="4">
    <citation type="journal article" date="2014" name="Nature">
        <title>Sulphoglycolysis in Escherichia coli K-12 closes a gap in the biogeochemical sulphur cycle.</title>
        <authorList>
            <person name="Denger K."/>
            <person name="Weiss M."/>
            <person name="Felux A.K."/>
            <person name="Schneider A."/>
            <person name="Mayer C."/>
            <person name="Spiteller D."/>
            <person name="Huhn T."/>
            <person name="Cook A.M."/>
            <person name="Schleheck D."/>
        </authorList>
    </citation>
    <scope>PROBABLE FUNCTION</scope>
    <source>
        <strain>K12</strain>
    </source>
</reference>
<reference key="5">
    <citation type="journal article" date="2019" name="Microbiology">
        <title>Regulatory role of CsqR (YihW) in transcription of the genes for catabolism of the anionic sugar sulfoquinovose (SQ) in Escherichia coli K-12.</title>
        <authorList>
            <person name="Shimada T."/>
            <person name="Yamamoto K."/>
            <person name="Nakano M."/>
            <person name="Watanabe H."/>
            <person name="Schleheck D."/>
            <person name="Ishihama A."/>
        </authorList>
    </citation>
    <scope>FUNCTION</scope>
    <scope>DNA-BINDING</scope>
    <scope>ACTIVITY REGULATION</scope>
    <scope>SUBUNIT</scope>
    <scope>INDUCTION</scope>
    <source>
        <strain>K12 / W3110 / ATCC 27325 / DSM 5911</strain>
    </source>
</reference>
<evidence type="ECO:0000255" key="1">
    <source>
        <dbReference type="PROSITE-ProRule" id="PRU00349"/>
    </source>
</evidence>
<evidence type="ECO:0000269" key="2">
    <source>
    </source>
</evidence>
<evidence type="ECO:0000303" key="3">
    <source>
    </source>
</evidence>
<evidence type="ECO:0000305" key="4"/>
<evidence type="ECO:0000305" key="5">
    <source>
    </source>
</evidence>
<comment type="function">
    <text evidence="2 5">Involved in the regulation of the sulfoquinovose operon (PubMed:24463506, PubMed:30372406). Represses the expression of the yihUTS operon and of the yihV and csqR genes. Binds DNA inside the spacer between the bidirectional transcription units comprising the yihUTS operon and the yihV gene, and upstream the csqR gene itself (PubMed:30372406).</text>
</comment>
<comment type="activity regulation">
    <text evidence="2">Inactivated in the presence of the effectors sulfoquinovose and sulfoquinovosyl glycerol, leading to the de-repression of the target genes.</text>
</comment>
<comment type="subunit">
    <text evidence="2">Monomer in the absence of DNA. Exhibits a high level of cooperativity once it is bound to its target DNA.</text>
</comment>
<comment type="induction">
    <text evidence="2">Negatively autoregulated.</text>
</comment>
<comment type="sequence caution" evidence="4">
    <conflict type="erroneous initiation">
        <sequence resource="EMBL-CDS" id="AAB03017"/>
    </conflict>
    <text>Extended N-terminus.</text>
</comment>
<dbReference type="EMBL" id="L19201">
    <property type="protein sequence ID" value="AAB03017.1"/>
    <property type="status" value="ALT_INIT"/>
    <property type="molecule type" value="Genomic_DNA"/>
</dbReference>
<dbReference type="EMBL" id="U00096">
    <property type="protein sequence ID" value="AAD13446.2"/>
    <property type="molecule type" value="Genomic_DNA"/>
</dbReference>
<dbReference type="EMBL" id="AP009048">
    <property type="protein sequence ID" value="BAE77425.1"/>
    <property type="molecule type" value="Genomic_DNA"/>
</dbReference>
<dbReference type="RefSeq" id="NP_418320.2">
    <property type="nucleotide sequence ID" value="NC_000913.3"/>
</dbReference>
<dbReference type="RefSeq" id="WP_000059678.1">
    <property type="nucleotide sequence ID" value="NZ_STEB01000017.1"/>
</dbReference>
<dbReference type="SMR" id="P32144"/>
<dbReference type="BioGRID" id="4260965">
    <property type="interactions" value="99"/>
</dbReference>
<dbReference type="DIP" id="DIP-12504N"/>
<dbReference type="FunCoup" id="P32144">
    <property type="interactions" value="16"/>
</dbReference>
<dbReference type="STRING" id="511145.b3884"/>
<dbReference type="jPOST" id="P32144"/>
<dbReference type="PaxDb" id="511145-b3884"/>
<dbReference type="EnsemblBacteria" id="AAD13446">
    <property type="protein sequence ID" value="AAD13446"/>
    <property type="gene ID" value="b3884"/>
</dbReference>
<dbReference type="GeneID" id="948381"/>
<dbReference type="KEGG" id="ecj:JW5567"/>
<dbReference type="KEGG" id="eco:b3884"/>
<dbReference type="KEGG" id="ecoc:C3026_20995"/>
<dbReference type="PATRIC" id="fig|1411691.4.peg.2827"/>
<dbReference type="EchoBASE" id="EB1795"/>
<dbReference type="eggNOG" id="COG1349">
    <property type="taxonomic scope" value="Bacteria"/>
</dbReference>
<dbReference type="HOGENOM" id="CLU_060699_0_0_6"/>
<dbReference type="InParanoid" id="P32144"/>
<dbReference type="OMA" id="HYDIAFM"/>
<dbReference type="OrthoDB" id="9814815at2"/>
<dbReference type="PhylomeDB" id="P32144"/>
<dbReference type="BioCyc" id="EcoCyc:EG11849-MONOMER"/>
<dbReference type="PRO" id="PR:P32144"/>
<dbReference type="Proteomes" id="UP000000625">
    <property type="component" value="Chromosome"/>
</dbReference>
<dbReference type="GO" id="GO:0000987">
    <property type="term" value="F:cis-regulatory region sequence-specific DNA binding"/>
    <property type="evidence" value="ECO:0000318"/>
    <property type="project" value="GO_Central"/>
</dbReference>
<dbReference type="GO" id="GO:0003677">
    <property type="term" value="F:DNA binding"/>
    <property type="evidence" value="ECO:0000314"/>
    <property type="project" value="EcoCyc"/>
</dbReference>
<dbReference type="GO" id="GO:0003700">
    <property type="term" value="F:DNA-binding transcription factor activity"/>
    <property type="evidence" value="ECO:0000270"/>
    <property type="project" value="EcoCyc"/>
</dbReference>
<dbReference type="GO" id="GO:0098531">
    <property type="term" value="F:ligand-modulated transcription factor activity"/>
    <property type="evidence" value="ECO:0000318"/>
    <property type="project" value="GO_Central"/>
</dbReference>
<dbReference type="GO" id="GO:2000143">
    <property type="term" value="P:negative regulation of DNA-templated transcription initiation"/>
    <property type="evidence" value="ECO:0000270"/>
    <property type="project" value="EcoCyc"/>
</dbReference>
<dbReference type="GO" id="GO:0006355">
    <property type="term" value="P:regulation of DNA-templated transcription"/>
    <property type="evidence" value="ECO:0000318"/>
    <property type="project" value="GO_Central"/>
</dbReference>
<dbReference type="CDD" id="cd00090">
    <property type="entry name" value="HTH_ARSR"/>
    <property type="match status" value="1"/>
</dbReference>
<dbReference type="FunFam" id="1.10.10.10:FF:000081">
    <property type="entry name" value="DeoR/GlpR family transcriptional regulator"/>
    <property type="match status" value="1"/>
</dbReference>
<dbReference type="FunFam" id="3.30.750.70:FF:000001">
    <property type="entry name" value="DeoR/GlpR family transcriptional regulator"/>
    <property type="match status" value="1"/>
</dbReference>
<dbReference type="Gene3D" id="3.30.750.70">
    <property type="entry name" value="4-hydroxybutyrate coenzyme like domains"/>
    <property type="match status" value="1"/>
</dbReference>
<dbReference type="Gene3D" id="1.10.10.10">
    <property type="entry name" value="Winged helix-like DNA-binding domain superfamily/Winged helix DNA-binding domain"/>
    <property type="match status" value="1"/>
</dbReference>
<dbReference type="InterPro" id="IPR011991">
    <property type="entry name" value="ArsR-like_HTH"/>
</dbReference>
<dbReference type="InterPro" id="IPR050313">
    <property type="entry name" value="Carb_Metab_HTH_regulators"/>
</dbReference>
<dbReference type="InterPro" id="IPR014036">
    <property type="entry name" value="DeoR-like_C"/>
</dbReference>
<dbReference type="InterPro" id="IPR001034">
    <property type="entry name" value="DeoR_HTH"/>
</dbReference>
<dbReference type="InterPro" id="IPR037171">
    <property type="entry name" value="NagB/RpiA_transferase-like"/>
</dbReference>
<dbReference type="InterPro" id="IPR018356">
    <property type="entry name" value="Tscrpt_reg_HTH_DeoR_CS"/>
</dbReference>
<dbReference type="InterPro" id="IPR036388">
    <property type="entry name" value="WH-like_DNA-bd_sf"/>
</dbReference>
<dbReference type="InterPro" id="IPR036390">
    <property type="entry name" value="WH_DNA-bd_sf"/>
</dbReference>
<dbReference type="PANTHER" id="PTHR30363">
    <property type="entry name" value="HTH-TYPE TRANSCRIPTIONAL REGULATOR SRLR-RELATED"/>
    <property type="match status" value="1"/>
</dbReference>
<dbReference type="PANTHER" id="PTHR30363:SF19">
    <property type="entry name" value="HTH-TYPE TRANSCRIPTIONAL REPRESSOR CSQR"/>
    <property type="match status" value="1"/>
</dbReference>
<dbReference type="Pfam" id="PF00455">
    <property type="entry name" value="DeoRC"/>
    <property type="match status" value="1"/>
</dbReference>
<dbReference type="Pfam" id="PF08220">
    <property type="entry name" value="HTH_DeoR"/>
    <property type="match status" value="1"/>
</dbReference>
<dbReference type="PRINTS" id="PR00037">
    <property type="entry name" value="HTHLACR"/>
</dbReference>
<dbReference type="SMART" id="SM01134">
    <property type="entry name" value="DeoRC"/>
    <property type="match status" value="1"/>
</dbReference>
<dbReference type="SMART" id="SM00420">
    <property type="entry name" value="HTH_DEOR"/>
    <property type="match status" value="1"/>
</dbReference>
<dbReference type="SUPFAM" id="SSF100950">
    <property type="entry name" value="NagB/RpiA/CoA transferase-like"/>
    <property type="match status" value="1"/>
</dbReference>
<dbReference type="SUPFAM" id="SSF46785">
    <property type="entry name" value="Winged helix' DNA-binding domain"/>
    <property type="match status" value="1"/>
</dbReference>
<dbReference type="PROSITE" id="PS00894">
    <property type="entry name" value="HTH_DEOR_1"/>
    <property type="match status" value="1"/>
</dbReference>
<dbReference type="PROSITE" id="PS51000">
    <property type="entry name" value="HTH_DEOR_2"/>
    <property type="match status" value="1"/>
</dbReference>
<organism>
    <name type="scientific">Escherichia coli (strain K12)</name>
    <dbReference type="NCBI Taxonomy" id="83333"/>
    <lineage>
        <taxon>Bacteria</taxon>
        <taxon>Pseudomonadati</taxon>
        <taxon>Pseudomonadota</taxon>
        <taxon>Gammaproteobacteria</taxon>
        <taxon>Enterobacterales</taxon>
        <taxon>Enterobacteriaceae</taxon>
        <taxon>Escherichia</taxon>
    </lineage>
</organism>
<gene>
    <name evidence="3" type="primary">csqR</name>
    <name type="synonym">yihW</name>
    <name type="ordered locus">b3884</name>
    <name type="ordered locus">JW5567</name>
</gene>